<comment type="function">
    <text evidence="4 15 16 20 24 26 34">A secreted protein. Acts as a strong host (human) T-cell antigen (PubMed:11940590). Involved in translocation of bacteria from the host (human) phagolysosome to the host cytoplasm (PubMed:17604718). Might serve as a chaperone to prevent uncontrolled membrane lysis by its partner EsxA; native protein binds poorly to artificial liposomes in the absence or presence of EsxA (PubMed:17557817, PubMed:26260636). EsxA and EsxA-EsxB are cytotoxic to pneumocytes (PubMed:19906174). EsxB (and EsxA-EsxB but not EsxA alone) activates human neutrophils; EsxB transiently induces host (human) intracellular Ca(2+) mobility in a dose-dependent manner, monocytes and lymphocytes do not respond (PubMed:25332123). Neutrophils respond to EsxB by chemotaxis and primed neutrophils treated with EsxB produce reactive oxygen species (ROS); Ca(2+) release and the ROS burst via are induced by an unidentified G-protein coupled receptor (PubMed:25332123). May help regulate assembly and function of the type VII secretion system (T7SS) (PubMed:25865481).</text>
</comment>
<comment type="subunit">
    <text evidence="1 4 5 9 11 13 14 15 18 20 21 22 23 25 26 27">Able to form a homodimer (By similarity). Forms a tight 1:1 complex with EsxA (ESAT-6) (PubMed:11940590, PubMed:14557536, PubMed:15973432, PubMed:16048998, PubMed:16973880, PubMed:19854905, PubMed:19906174, PubMed:20085764, PubMed:23150662, PubMed:24586681, PubMed:26260636). The complex persists even after secretion (PubMed:16048998). In vitro EsxB only interacts with non-acetylated EsxA; it interacts with C-terminally truncated EsxA (missing the last 10 residues) (PubMed:15378760). The native EsxA-EsxB complex dissociates at pH 4.0, and EsxA may then be freed to then lyse membranes (PubMed:17557817). Another study using recombinant protein did not find dissociation at acidic pH (PubMed:23150662). Recombinant heterodimer (with a His tag on EsxB) can be dissociated by the detergents amidosulfobetaine-14 and lauryldimethylamine N-oxide (PubMed:26260636). Interacts with EccCb1 (PubMed:14557536, PubMed:16973880, PubMed:25865481). Interacts with PPE68 (PubMed:17433643). Interacts with EccCa1, EccCb1, EsxA, EspI and EspJ (PubMed:19854905). An artificial EsxB-EsxA heterodimer interacts with EspA, EccB1, EccCa1, EccCb1, EspI, EspJ, EccA2 and EccE2; the latter 2 are from the adjacent ESX-2 locus (PubMed:19854905). Interacts with host (human) beta-2-microglobulin (B2M) in complex with EsxA; only binds free B2M and not B2M in complex with HLA-I (PubMed:25356553).</text>
</comment>
<comment type="interaction">
    <interactant intactId="EBI-1253936">
        <id>P9WNK5</id>
    </interactant>
    <interactant intactId="EBI-1254029">
        <id>P9WPC9</id>
        <label>clpC1</label>
    </interactant>
    <organismsDiffer>false</organismsDiffer>
    <experiments>3</experiments>
</comment>
<comment type="interaction">
    <interactant intactId="EBI-1253936">
        <id>P9WNK5</id>
    </interactant>
    <interactant intactId="EBI-6514882">
        <id>P9WNB1</id>
        <label>eccCb1</label>
    </interactant>
    <organismsDiffer>false</organismsDiffer>
    <experiments>3</experiments>
</comment>
<comment type="interaction">
    <interactant intactId="EBI-1253936">
        <id>P9WNK5</id>
    </interactant>
    <interactant intactId="EBI-1253925">
        <id>P9WNK7</id>
        <label>esxA</label>
    </interactant>
    <organismsDiffer>false</organismsDiffer>
    <experiments>22</experiments>
</comment>
<comment type="subcellular location">
    <subcellularLocation>
        <location evidence="5 8 11 28">Secreted</location>
    </subcellularLocation>
    <subcellularLocation>
        <location evidence="20">Secreted</location>
        <location evidence="20">Cell wall</location>
    </subcellularLocation>
    <subcellularLocation>
        <location evidence="9 17">Host cell surface</location>
    </subcellularLocation>
    <subcellularLocation>
        <location evidence="25">Host endoplasmic reticulum</location>
    </subcellularLocation>
    <text evidence="9 17 19 25">Probably secreted via the ESX-1 / type VII secretion system (T7SS) (PubMed:19876390). Binds to CD14+ and CD19+ host (human) cells (PubMed:19265145). Localized on the cell surface of host (human) cell monocytes and macrophages (often in patches), but not fibroblasts (PubMed:15973432). Exogenous EsxA and EsxA-EsxB complex can enter host (human and mouse) endoplasmic reticulum (PubMed:25356553).</text>
</comment>
<comment type="induction">
    <text evidence="28">Constitutively expressed, part of the esxB-esxA operon (PubMed:9846755).</text>
</comment>
<comment type="domain">
    <text evidence="11 13">May be secreted as a 4 coiled-coil complex with EsxA (PubMed:16048998). The C-terminal domain is required for interaction with both EsxA and EccCb1; the last 7 amino acids are necessary and sufficient for EccCb1 binding and secretion (PubMed:16973880).</text>
</comment>
<comment type="disruption phenotype">
    <text evidence="6 7 10 12">Bacteria no longer translocate from the phagolysosome to the cytosol of host (human) cells probably due to polar effects on the downstream esxA gene; bacteria replicate in phagolysosome, decreased apoptosis of infected host (human) dendritic cells (PubMed:17604718). Loss of ability to lyse host (human) lung epithelial cells, possibly due to polar effects on the downstream esxA gene; in BALB/c-infected mice bacteria are not as invasive and cause decreased lung disease (PubMed:14557547). No growth in the human macrophage-like cell line THP-1, no cytotoxicity (PubMed:14756778). Inactivation leads to absence of EsxA and EsxB from cell lysates (PubMed:14756778, PubMed:16368961). No secretion of EspA (PubMed:16030141).</text>
</comment>
<comment type="miscellaneous">
    <text evidence="6 7 12">Genes esxA and esxB are part of RD1 (part of a 15-gene locus known as ESX-1), a section of DNA deleted in the M.bovis BCG strain used for vaccination. Deletion of this region is thought to be largely responsible for the attenuation of BCG, and esxA and EsxB in particular are quite important in this effect (PubMed:14557547, PubMed:14756778, PubMed:16368961).</text>
</comment>
<comment type="miscellaneous">
    <text evidence="10">Secretion of EspA, EsxA and EsxB is mutually dependent (PubMed:16030141).</text>
</comment>
<comment type="miscellaneous">
    <text evidence="18">To improve expression in E.coli the proteins were cloned as a single protein in the order esxB-esxA with a cleavable thrombin tag (PubMed:19854905).</text>
</comment>
<comment type="similarity">
    <text evidence="33">Belongs to the WXG100 family. CFP-10 subfamily.</text>
</comment>
<protein>
    <recommendedName>
        <fullName>ESAT-6-like protein EsxB</fullName>
    </recommendedName>
    <alternativeName>
        <fullName evidence="30">10 kDa culture filtrate antigen CFP-10</fullName>
        <shortName>CFP-10</shortName>
    </alternativeName>
    <alternativeName>
        <fullName>Secreted antigenic protein MTSA-10</fullName>
    </alternativeName>
</protein>
<name>ESXB_MYCTU</name>
<keyword id="KW-0002">3D-structure</keyword>
<keyword id="KW-0007">Acetylation</keyword>
<keyword id="KW-0134">Cell wall</keyword>
<keyword id="KW-0143">Chaperone</keyword>
<keyword id="KW-0175">Coiled coil</keyword>
<keyword id="KW-0903">Direct protein sequencing</keyword>
<keyword id="KW-1038">Host endoplasmic reticulum</keyword>
<keyword id="KW-1185">Reference proteome</keyword>
<keyword id="KW-0964">Secreted</keyword>
<keyword id="KW-0843">Virulence</keyword>
<organism>
    <name type="scientific">Mycobacterium tuberculosis (strain ATCC 25618 / H37Rv)</name>
    <dbReference type="NCBI Taxonomy" id="83332"/>
    <lineage>
        <taxon>Bacteria</taxon>
        <taxon>Bacillati</taxon>
        <taxon>Actinomycetota</taxon>
        <taxon>Actinomycetes</taxon>
        <taxon>Mycobacteriales</taxon>
        <taxon>Mycobacteriaceae</taxon>
        <taxon>Mycobacterium</taxon>
        <taxon>Mycobacterium tuberculosis complex</taxon>
    </lineage>
</organism>
<reference key="1">
    <citation type="journal article" date="1998" name="Microbiology">
        <title>A Mycobacterium tuberculosis operon encoding ESAT-6 and a novel low-molecular-mass culture filtrate protein (CFP-10).</title>
        <authorList>
            <person name="Berthet F.-X."/>
            <person name="Rasmussen P.B."/>
            <person name="Rosenkrands I."/>
            <person name="Andersen P."/>
            <person name="Gicquel B."/>
        </authorList>
    </citation>
    <scope>NUCLEOTIDE SEQUENCE [GENOMIC DNA]</scope>
    <scope>PROTEIN SEQUENCE OF 2-16</scope>
    <scope>SUBCELLULAR LOCATION</scope>
    <scope>INDUCTION</scope>
    <source>
        <strain>ATCC 25618 / H37Rv</strain>
    </source>
</reference>
<reference key="2">
    <citation type="submission" date="2001-09" db="EMBL/GenBank/DDBJ databases">
        <title>Rv3874 (mtsa-10) gene of a clinical isolate of Mycobacterium tuberculosis from India.</title>
        <authorList>
            <person name="Singh B."/>
            <person name="Siddiqui Z."/>
            <person name="Singh S."/>
            <person name="Sharma P."/>
        </authorList>
    </citation>
    <scope>NUCLEOTIDE SEQUENCE [GENOMIC DNA]</scope>
</reference>
<reference key="3">
    <citation type="journal article" date="1998" name="Nature">
        <title>Deciphering the biology of Mycobacterium tuberculosis from the complete genome sequence.</title>
        <authorList>
            <person name="Cole S.T."/>
            <person name="Brosch R."/>
            <person name="Parkhill J."/>
            <person name="Garnier T."/>
            <person name="Churcher C.M."/>
            <person name="Harris D.E."/>
            <person name="Gordon S.V."/>
            <person name="Eiglmeier K."/>
            <person name="Gas S."/>
            <person name="Barry C.E. III"/>
            <person name="Tekaia F."/>
            <person name="Badcock K."/>
            <person name="Basham D."/>
            <person name="Brown D."/>
            <person name="Chillingworth T."/>
            <person name="Connor R."/>
            <person name="Davies R.M."/>
            <person name="Devlin K."/>
            <person name="Feltwell T."/>
            <person name="Gentles S."/>
            <person name="Hamlin N."/>
            <person name="Holroyd S."/>
            <person name="Hornsby T."/>
            <person name="Jagels K."/>
            <person name="Krogh A."/>
            <person name="McLean J."/>
            <person name="Moule S."/>
            <person name="Murphy L.D."/>
            <person name="Oliver S."/>
            <person name="Osborne J."/>
            <person name="Quail M.A."/>
            <person name="Rajandream M.A."/>
            <person name="Rogers J."/>
            <person name="Rutter S."/>
            <person name="Seeger K."/>
            <person name="Skelton S."/>
            <person name="Squares S."/>
            <person name="Squares R."/>
            <person name="Sulston J.E."/>
            <person name="Taylor K."/>
            <person name="Whitehead S."/>
            <person name="Barrell B.G."/>
        </authorList>
    </citation>
    <scope>NUCLEOTIDE SEQUENCE [LARGE SCALE GENOMIC DNA]</scope>
    <source>
        <strain>ATCC 25618 / H37Rv</strain>
    </source>
</reference>
<reference key="4">
    <citation type="journal article" date="2002" name="J. Biol. Chem.">
        <title>Conclusive evidence that the major T-cell antigens of the Mycobacterium tuberculosis complex ESAT-6 and CFP-10 form a tight, 1:1 complex and characterization of the structural properties of ESAT-6, CFP-10, and the ESAT-6*CFP-10 complex. Implications for pathogenesis and virulence.</title>
        <authorList>
            <person name="Renshaw P.S."/>
            <person name="Panagiotidou P."/>
            <person name="Whelan A."/>
            <person name="Gordon S.V."/>
            <person name="Hewinson R.G."/>
            <person name="Williamson R.A."/>
            <person name="Carr M.D."/>
        </authorList>
    </citation>
    <scope>FUNCTION</scope>
    <scope>SUBUNIT</scope>
    <scope>INTERACTION WITH ESXA</scope>
    <source>
        <strain>ATCC 25618 / H37Rv</strain>
    </source>
</reference>
<reference key="5">
    <citation type="journal article" date="2003" name="Proc. Natl. Acad. Sci. U.S.A.">
        <title>The primary mechanism of attenuation of bacillus Calmette-Guerin is a loss of secreted lytic function required for invasion of lung interstitial tissue.</title>
        <authorList>
            <person name="Hsu T."/>
            <person name="Hingley-Wilson S.M."/>
            <person name="Chen B."/>
            <person name="Chen M."/>
            <person name="Dai A.Z."/>
            <person name="Morin P.M."/>
            <person name="Marks C.B."/>
            <person name="Padiyar J."/>
            <person name="Goulding C."/>
            <person name="Gingery M."/>
            <person name="Eisenberg D."/>
            <person name="Russell R.G."/>
            <person name="Derrick S.C."/>
            <person name="Collins F.M."/>
            <person name="Morris S.L."/>
            <person name="King C.H."/>
            <person name="Jacobs W.R. Jr."/>
        </authorList>
    </citation>
    <scope>FUNCTION</scope>
    <scope>DISRUPTION PHENOTYPE</scope>
    <source>
        <strain>ATCC 25618 / H37Rv</strain>
        <strain>ATCC 35801 / TMC 107 / Erdman</strain>
    </source>
</reference>
<reference key="6">
    <citation type="journal article" date="2003" name="Proc. Natl. Acad. Sci. U.S.A.">
        <title>Acute infection and macrophage subversion by Mycobacterium tuberculosis require a specialized secretion system.</title>
        <authorList>
            <person name="Stanley S.A."/>
            <person name="Raghavan S."/>
            <person name="Hwang W.W."/>
            <person name="Cox J.S."/>
        </authorList>
    </citation>
    <scope>INTERACTION WITH ESXA AND ECCCB1</scope>
    <scope>SUBCELLULAR LOCATION</scope>
    <source>
        <strain>ATCC 35801 / TMC 107 / Erdman</strain>
    </source>
</reference>
<reference key="7">
    <citation type="journal article" date="2004" name="Mol. Microbiol.">
        <title>Individual RD1-region genes are required for export of ESAT-6/CFP-10 and for virulence of Mycobacterium tuberculosis.</title>
        <authorList>
            <person name="Guinn K.M."/>
            <person name="Hickey M.J."/>
            <person name="Mathur S.K."/>
            <person name="Zakel K.L."/>
            <person name="Grotzke J.E."/>
            <person name="Lewinsohn D.M."/>
            <person name="Smith S."/>
            <person name="Sherman D.R."/>
        </authorList>
    </citation>
    <scope>DISRUPTION PHENOTYPE</scope>
    <source>
        <strain>ATCC 25618 / H37Rv</strain>
    </source>
</reference>
<reference key="8">
    <citation type="journal article" date="2004" name="Proteomics">
        <title>CFP10 discriminates between nonacetylated and acetylated ESAT-6 of Mycobacterium tuberculosis by differential interaction.</title>
        <authorList>
            <person name="Okkels L.M."/>
            <person name="Mueller E.C."/>
            <person name="Schmid M."/>
            <person name="Rosenkrands I."/>
            <person name="Kaufmann S.H."/>
            <person name="Andersen P."/>
            <person name="Jungblut P.R."/>
        </authorList>
    </citation>
    <scope>SUBUNIT</scope>
    <scope>SUBCELLULAR LOCATION</scope>
    <source>
        <strain>ATCC 27294 / TMC 102 / H37Rv</strain>
    </source>
</reference>
<reference key="9">
    <citation type="journal article" date="2005" name="Proc. Natl. Acad. Sci. U.S.A.">
        <title>Mutually dependent secretion of proteins required for mycobacterial virulence.</title>
        <authorList>
            <person name="Fortune S.M."/>
            <person name="Jaeger A."/>
            <person name="Sarracino D.A."/>
            <person name="Chase M.R."/>
            <person name="Sassetti C.M."/>
            <person name="Sherman D.R."/>
            <person name="Bloom B.R."/>
            <person name="Rubin E.J."/>
        </authorList>
    </citation>
    <scope>IDENTIFICATION BY MASS SPECTROMETRY</scope>
    <scope>DISRUPTION PHENOTYPE</scope>
    <source>
        <strain>ATCC 25618 / H37Rv</strain>
    </source>
</reference>
<reference key="10">
    <citation type="journal article" date="2005" name="J. Biol. Chem.">
        <title>Functional analysis of early secreted antigenic target-6, the dominant T-cell antigen of Mycobacterium tuberculosis, reveals key residues involved in secretion, complex formation, virulence, and immunogenicity.</title>
        <authorList>
            <person name="Brodin P."/>
            <person name="de Jonge M.I."/>
            <person name="Majlessi L."/>
            <person name="Leclerc C."/>
            <person name="Nilges M."/>
            <person name="Cole S.T."/>
            <person name="Brosch R."/>
        </authorList>
    </citation>
    <scope>FUNCTION</scope>
    <scope>SUBUNIT</scope>
    <scope>SUBCELLULAR LOCATION</scope>
    <scope>DOMAIN</scope>
    <scope>COILED COIL</scope>
</reference>
<reference key="11">
    <citation type="journal article" date="2006" name="Infect. Immun.">
        <title>Dissection of ESAT-6 system 1 of Mycobacterium tuberculosis and impact on immunogenicity and virulence.</title>
        <authorList>
            <person name="Brodin P."/>
            <person name="Majlessi L."/>
            <person name="Marsollier L."/>
            <person name="de Jonge M.I."/>
            <person name="Bottai D."/>
            <person name="Demangel C."/>
            <person name="Hinds J."/>
            <person name="Neyrolles O."/>
            <person name="Butcher P.D."/>
            <person name="Leclerc C."/>
            <person name="Cole S.T."/>
            <person name="Brosch R."/>
        </authorList>
    </citation>
    <scope>DISRUPTION PHENOTYPE</scope>
</reference>
<reference key="12">
    <citation type="journal article" date="2006" name="Science">
        <title>C-terminal signal sequence promotes virulence factor secretion in Mycobacterium tuberculosis.</title>
        <authorList>
            <person name="Champion P.A."/>
            <person name="Stanley S.A."/>
            <person name="Champion M.M."/>
            <person name="Brown E.J."/>
            <person name="Cox J.S."/>
        </authorList>
    </citation>
    <scope>INTERACTION WITH ESXA AND ECCCB1</scope>
    <scope>DOMAIN</scope>
    <scope>MUTAGENESIS OF LEU-94; SER-96; MET-98; GLY-99 AND PHE-100</scope>
</reference>
<reference key="13">
    <citation type="journal article" date="2007" name="Cell">
        <title>M. tuberculosis and M. leprae translocate from the phagolysosome to the cytosol in myeloid cells.</title>
        <authorList>
            <person name="van der Wel N."/>
            <person name="Hava D."/>
            <person name="Houben D."/>
            <person name="Fluitsma D."/>
            <person name="van Zon M."/>
            <person name="Pierson J."/>
            <person name="Brenner M."/>
            <person name="Peters P.J."/>
        </authorList>
    </citation>
    <scope>FUNCTION</scope>
    <scope>DISRUPTION PHENOTYPE</scope>
    <source>
        <strain>ATCC 25618 / H37Rv</strain>
    </source>
</reference>
<reference key="14">
    <citation type="journal article" date="2007" name="J. Bacteriol.">
        <title>ESAT-6 from Mycobacterium tuberculosis dissociates from its putative chaperone CFP-10 under acidic conditions and exhibits membrane-lysing activity.</title>
        <authorList>
            <person name="de Jonge M.I."/>
            <person name="Pehau-Arnaudet G."/>
            <person name="Fretz M.M."/>
            <person name="Romain F."/>
            <person name="Bottai D."/>
            <person name="Brodin P."/>
            <person name="Honore N."/>
            <person name="Marchal G."/>
            <person name="Jiskoot W."/>
            <person name="England P."/>
            <person name="Cole S.T."/>
            <person name="Brosch R."/>
        </authorList>
    </citation>
    <scope>FUNCTION</scope>
    <scope>SUBUNIT</scope>
</reference>
<reference key="15">
    <citation type="journal article" date="2009" name="Microbiol. Res.">
        <title>A protein linkage map of the ESAT-6 secretion system 1 (ESX-1) of Mycobacterium tuberculosis.</title>
        <authorList>
            <person name="Teutschbein J."/>
            <person name="Schumann G."/>
            <person name="Mollmann U."/>
            <person name="Grabley S."/>
            <person name="Cole S.T."/>
            <person name="Munder T."/>
        </authorList>
    </citation>
    <scope>INTERACTION WITH PPE68</scope>
</reference>
<reference key="16">
    <citation type="journal article" date="2009" name="J. Immunol.">
        <title>ESAT-6 inhibits production of IFN-gamma by Mycobacterium tuberculosis-responsive human T cells.</title>
        <authorList>
            <person name="Wang X."/>
            <person name="Barnes P.F."/>
            <person name="Dobos-Elder K.M."/>
            <person name="Townsend J.C."/>
            <person name="Chung Y.T."/>
            <person name="Shams H."/>
            <person name="Weis S.E."/>
            <person name="Samten B."/>
        </authorList>
    </citation>
    <scope>SUBCELLULAR LOCATION</scope>
</reference>
<reference key="17">
    <citation type="journal article" date="2009" name="PLoS Pathog.">
        <title>Systematic genetic nomenclature for type VII secretion systems.</title>
        <authorList>
            <person name="Bitter W."/>
            <person name="Houben E.N."/>
            <person name="Bottai D."/>
            <person name="Brodin P."/>
            <person name="Brown E.J."/>
            <person name="Cox J.S."/>
            <person name="Derbyshire K."/>
            <person name="Fortune S.M."/>
            <person name="Gao L.Y."/>
            <person name="Liu J."/>
            <person name="Gey van Pittius N.C."/>
            <person name="Pym A.S."/>
            <person name="Rubin E.J."/>
            <person name="Sherman D.R."/>
            <person name="Cole S.T."/>
            <person name="Brosch R."/>
        </authorList>
    </citation>
    <scope>NOMENCLATURE</scope>
</reference>
<reference key="18">
    <citation type="journal article" date="2010" name="J. Bacteriol.">
        <title>Conservation of structure and protein-protein interactions mediated by the secreted mycobacterial proteins EsxA, EsxB, and EspA.</title>
        <authorList>
            <person name="Callahan B."/>
            <person name="Nguyen K."/>
            <person name="Collins A."/>
            <person name="Valdes K."/>
            <person name="Caplow M."/>
            <person name="Crossman D.K."/>
            <person name="Steyn A.J."/>
            <person name="Eisele L."/>
            <person name="Derbyshire K.M."/>
        </authorList>
    </citation>
    <scope>SUBUNIT</scope>
    <scope>MUTAGENESIS OF GLN-42; ALA-62 AND SER-95</scope>
    <source>
        <strain>ATCC 25618 / H37Rv</strain>
    </source>
</reference>
<reference key="19">
    <citation type="journal article" date="2010" name="Mol. Microbiol.">
        <title>Potential role for ESAT6 in dissemination of M. tuberculosis via human lung epithelial cells.</title>
        <authorList>
            <person name="Kinhikar A.G."/>
            <person name="Verma I."/>
            <person name="Chandra D."/>
            <person name="Singh K.K."/>
            <person name="Weldingh K."/>
            <person name="Andersen P."/>
            <person name="Hsu T."/>
            <person name="Jacobs W.R. Jr."/>
            <person name="Laal S."/>
        </authorList>
    </citation>
    <scope>FUNCTION</scope>
    <scope>SUBCELLULAR LOCATION</scope>
    <scope>SUBUNIT</scope>
    <source>
        <strain>ATCC 25618 / H37Rv</strain>
    </source>
</reference>
<reference key="20">
    <citation type="journal article" date="2011" name="Mol. Cell. Proteomics">
        <title>Proteogenomic analysis of Mycobacterium tuberculosis by high resolution mass spectrometry.</title>
        <authorList>
            <person name="Kelkar D.S."/>
            <person name="Kumar D."/>
            <person name="Kumar P."/>
            <person name="Balakrishnan L."/>
            <person name="Muthusamy B."/>
            <person name="Yadav A.K."/>
            <person name="Shrivastava P."/>
            <person name="Marimuthu A."/>
            <person name="Anand S."/>
            <person name="Sundaram H."/>
            <person name="Kingsbury R."/>
            <person name="Harsha H.C."/>
            <person name="Nair B."/>
            <person name="Prasad T.S."/>
            <person name="Chauhan D.S."/>
            <person name="Katoch K."/>
            <person name="Katoch V.M."/>
            <person name="Kumar P."/>
            <person name="Chaerkady R."/>
            <person name="Ramachandran S."/>
            <person name="Dash D."/>
            <person name="Pandey A."/>
        </authorList>
    </citation>
    <scope>ACETYLATION [LARGE SCALE ANALYSIS] AT ALA-2</scope>
    <scope>CLEAVAGE OF INITIATOR METHIONINE [LARGE SCALE ANALYSIS]</scope>
    <scope>IDENTIFICATION BY MASS SPECTROMETRY [LARGE SCALE ANALYSIS]</scope>
    <source>
        <strain>ATCC 25618 / H37Rv</strain>
    </source>
</reference>
<reference key="21">
    <citation type="journal article" date="2012" name="J. Biol. Chem.">
        <title>Mycobacterium tuberculosis ESAT-6 exhibits a unique membrane-interacting activity that is not found in its ortholog from non-pathogenic Mycobacterium smegmatis.</title>
        <authorList>
            <person name="De Leon J."/>
            <person name="Jiang G."/>
            <person name="Ma Y."/>
            <person name="Rubin E."/>
            <person name="Fortune S."/>
            <person name="Sun J."/>
        </authorList>
    </citation>
    <scope>SUBUNIT</scope>
    <source>
        <strain>ATCC 25618 / H37Rv</strain>
    </source>
</reference>
<reference key="22">
    <citation type="journal article" date="2014" name="PLoS Pathog.">
        <title>The ESAT-6 protein of Mycobacterium tuberculosis interacts with beta-2-microglobulin (beta2M) affecting antigen presentation function of macrophage.</title>
        <authorList>
            <person name="Sreejit G."/>
            <person name="Ahmed A."/>
            <person name="Parveen N."/>
            <person name="Jha V."/>
            <person name="Valluri V.L."/>
            <person name="Ghosh S."/>
            <person name="Mukhopadhyay S."/>
        </authorList>
    </citation>
    <scope>INTERACTION WITH HOST B2M</scope>
    <scope>SUBCELLULAR LOCATION</scope>
</reference>
<reference key="23">
    <citation type="journal article" date="2015" name="Infect. Immun.">
        <title>CFP-10 from Mycobacterium tuberculosis selectively activates human neutrophils through a pertussis toxin-sensitive chemotactic receptor.</title>
        <authorList>
            <person name="Welin A."/>
            <person name="Bjoernsdottir H."/>
            <person name="Winther M."/>
            <person name="Christenson K."/>
            <person name="Oprea T."/>
            <person name="Karlsson A."/>
            <person name="Forsman H."/>
            <person name="Dahlgren C."/>
            <person name="Bylund J."/>
        </authorList>
    </citation>
    <scope>FUNCTION IN NEUTROPHIL ACTIVATION</scope>
</reference>
<reference key="24">
    <citation type="journal article" date="2015" name="Cell">
        <title>Substrates control multimerization and activation of the multi-domain ATPase motor of type VII secretion.</title>
        <authorList>
            <person name="Rosenberg O.S."/>
            <person name="Dovala D."/>
            <person name="Li X."/>
            <person name="Connolly L."/>
            <person name="Bendebury A."/>
            <person name="Finer-Moore J."/>
            <person name="Holton J."/>
            <person name="Cheng Y."/>
            <person name="Stroud R.M."/>
            <person name="Cox J.S."/>
        </authorList>
    </citation>
    <scope>POSSIBLE FUNCTION</scope>
    <scope>INTERACTION WITH ECCCB1</scope>
</reference>
<reference key="25">
    <citation type="journal article" date="2015" name="FEBS J.">
        <title>Two distinct conformational states of Mycobacterium tuberculosis virulent factor early secreted antigenic target 6 kDa are behind the discrepancy around its biological functions.</title>
        <authorList>
            <person name="Refai A."/>
            <person name="Haoues M."/>
            <person name="Othman H."/>
            <person name="Barbouche M.R."/>
            <person name="Moua P."/>
            <person name="Bondon A."/>
            <person name="Mouret L."/>
            <person name="Srairi-Abid N."/>
            <person name="Essafi M."/>
        </authorList>
    </citation>
    <scope>FUNCTION</scope>
    <scope>SUBUNIT</scope>
</reference>
<reference key="26">
    <citation type="journal article" date="2010" name="FEBS Lett.">
        <title>Stoichiometric protein complex formation and over-expression using the prokaryotic native operon structure.</title>
        <authorList>
            <person name="Poulsen C."/>
            <person name="Holton S."/>
            <person name="Geerlof A."/>
            <person name="Wilmanns M."/>
            <person name="Song Y.H."/>
        </authorList>
    </citation>
    <scope>PRELIMINARY X-RAY CRYSTALLOGRAPHY</scope>
    <scope>SUBUNIT</scope>
    <source>
        <strain>ATCC 25618 / H37Rv</strain>
    </source>
</reference>
<reference key="27">
    <citation type="journal article" date="2005" name="EMBO J.">
        <title>Structure and function of the complex formed by the tuberculosis virulence factors CFP-10 and ESAT-6.</title>
        <authorList>
            <person name="Renshaw P.S."/>
            <person name="Lightbody K.L."/>
            <person name="Veverka V."/>
            <person name="Muskett F.W."/>
            <person name="Kelly G."/>
            <person name="Frenkiel T.A."/>
            <person name="Gordon S.V."/>
            <person name="Hewinson R.G."/>
            <person name="Burke B."/>
            <person name="Norman J."/>
            <person name="Williamson R.A."/>
            <person name="Carr M.D."/>
        </authorList>
    </citation>
    <scope>STRUCTURE BY NMR OF 2-100 IN COMPLEX WITH ESAT-6 (ESXA)</scope>
    <scope>SUBUNIT</scope>
    <scope>SUBCELLULAR LOCATION</scope>
</reference>
<reference key="28">
    <citation type="journal article" date="2014" name="PLoS ONE">
        <title>WXG100 protein superfamily consists of three subfamilies and exhibits an alpha-helical C-terminal conserved residue pattern.</title>
        <authorList>
            <person name="Poulsen C."/>
            <person name="Panjikar S."/>
            <person name="Holton S.J."/>
            <person name="Wilmanns M."/>
            <person name="Song Y.H."/>
        </authorList>
    </citation>
    <scope>X-RAY CRYSTALLOGRAPHY (2.15 ANGSTROMS) IN COMPLEX WITH ESAT-6 (ESXA)</scope>
    <source>
        <strain>H37Rv</strain>
    </source>
</reference>
<feature type="initiator methionine" description="Removed" evidence="28 35">
    <location>
        <position position="1"/>
    </location>
</feature>
<feature type="chain" id="PRO_0000167796" description="ESAT-6-like protein EsxB">
    <location>
        <begin position="2"/>
        <end position="100"/>
    </location>
</feature>
<feature type="region of interest" description="Disordered" evidence="3">
    <location>
        <begin position="81"/>
        <end position="100"/>
    </location>
</feature>
<feature type="region of interest" description="Required for ESAT-6/CFP-10 complex to bind to host macrophage and monocytes" evidence="9">
    <location>
        <begin position="87"/>
        <end position="100"/>
    </location>
</feature>
<feature type="coiled-coil region" evidence="32">
    <location>
        <begin position="7"/>
        <end position="42"/>
    </location>
</feature>
<feature type="coiled-coil region" evidence="2 32">
    <location>
        <begin position="49"/>
        <end position="86"/>
    </location>
</feature>
<feature type="compositionally biased region" description="Polar residues" evidence="3">
    <location>
        <begin position="91"/>
        <end position="100"/>
    </location>
</feature>
<feature type="modified residue" description="N-acetylalanine" evidence="35">
    <location>
        <position position="2"/>
    </location>
</feature>
<feature type="mutagenesis site" description="Abolishes EsxB-EsxA heterodimer interaction with EccCb1 and EspA, maintains interaction with EccA2 and EccE2." evidence="18">
    <original>Q</original>
    <variation>P</variation>
    <location>
        <position position="42"/>
    </location>
</feature>
<feature type="mutagenesis site" description="Abolishes EsxB-EsxA heterodimer interaction with EccCb1, weaker interaction with EspA, maintains interaction with EccA2 and EccE2." evidence="18">
    <original>A</original>
    <variation>S</variation>
    <location>
        <position position="62"/>
    </location>
</feature>
<feature type="mutagenesis site" description="Abolishes interaction with EccCb1, but not with EsxA." evidence="13">
    <original>L</original>
    <variation>A</variation>
    <location>
        <position position="94"/>
    </location>
</feature>
<feature type="mutagenesis site" description="Abolishes EsxB-EsxA heterodimer interaction with EccCb1, maintains interaction with EspA, EccA2 and EccE2." evidence="18">
    <original>S</original>
    <variation>T</variation>
    <location>
        <position position="95"/>
    </location>
</feature>
<feature type="mutagenesis site" description="No change in stability." evidence="13">
    <original>S</original>
    <variation>A</variation>
    <location>
        <position position="96"/>
    </location>
</feature>
<feature type="mutagenesis site" description="Abolishes interaction with EccCb1, but not with EsxA. No change in stability, but loss of secretion." evidence="13">
    <original>M</original>
    <variation>A</variation>
    <location>
        <position position="98"/>
    </location>
</feature>
<feature type="mutagenesis site" description="Abolishes interaction with EccCb1, but not with EsxA." evidence="13">
    <original>G</original>
    <variation>A</variation>
    <location>
        <position position="99"/>
    </location>
</feature>
<feature type="mutagenesis site" description="Abolishes interaction with EccCb1, but not with EsxA. No change in stability, but loss of secretion." evidence="13">
    <original>F</original>
    <variation>A</variation>
    <location>
        <position position="100"/>
    </location>
</feature>
<feature type="helix" evidence="36">
    <location>
        <begin position="2"/>
        <end position="10"/>
    </location>
</feature>
<feature type="helix" evidence="36">
    <location>
        <begin position="12"/>
        <end position="37"/>
    </location>
</feature>
<feature type="turn" evidence="36">
    <location>
        <begin position="38"/>
        <end position="41"/>
    </location>
</feature>
<feature type="helix" evidence="36">
    <location>
        <begin position="45"/>
        <end position="83"/>
    </location>
</feature>
<feature type="turn" evidence="37">
    <location>
        <begin position="89"/>
        <end position="94"/>
    </location>
</feature>
<feature type="helix" evidence="37">
    <location>
        <begin position="95"/>
        <end position="97"/>
    </location>
</feature>
<sequence length="100" mass="10794">MAEMKTDAATLAQEAGNFERISGDLKTQIDQVESTAGSLQGQWRGAAGTAAQAAVVRFQEAANKQKQELDEISTNIRQAGVQYSRADEEQQQALSSQMGF</sequence>
<dbReference type="EMBL" id="AF004671">
    <property type="protein sequence ID" value="AAC83445.1"/>
    <property type="molecule type" value="Genomic_DNA"/>
</dbReference>
<dbReference type="EMBL" id="AF419854">
    <property type="protein sequence ID" value="AAL14999.1"/>
    <property type="molecule type" value="Genomic_DNA"/>
</dbReference>
<dbReference type="EMBL" id="AL123456">
    <property type="protein sequence ID" value="CCP46703.1"/>
    <property type="molecule type" value="Genomic_DNA"/>
</dbReference>
<dbReference type="PIR" id="H70802">
    <property type="entry name" value="H70802"/>
</dbReference>
<dbReference type="RefSeq" id="NP_218391.1">
    <property type="nucleotide sequence ID" value="NC_000962.3"/>
</dbReference>
<dbReference type="RefSeq" id="WP_003399940.1">
    <property type="nucleotide sequence ID" value="NZ_NVQJ01000074.1"/>
</dbReference>
<dbReference type="PDB" id="1WA8">
    <property type="method" value="NMR"/>
    <property type="chains" value="A=2-100"/>
</dbReference>
<dbReference type="PDB" id="3FAV">
    <property type="method" value="X-ray"/>
    <property type="resolution" value="2.15 A"/>
    <property type="chains" value="A/C=1-100"/>
</dbReference>
<dbReference type="PDB" id="6J19">
    <property type="method" value="X-ray"/>
    <property type="resolution" value="1.98 A"/>
    <property type="chains" value="B=1-100"/>
</dbReference>
<dbReference type="PDBsum" id="1WA8"/>
<dbReference type="PDBsum" id="3FAV"/>
<dbReference type="PDBsum" id="6J19"/>
<dbReference type="BMRB" id="P9WNK5"/>
<dbReference type="SMR" id="P9WNK5"/>
<dbReference type="FunCoup" id="P9WNK5">
    <property type="interactions" value="7"/>
</dbReference>
<dbReference type="IntAct" id="P9WNK5">
    <property type="interactions" value="13"/>
</dbReference>
<dbReference type="MINT" id="P9WNK5"/>
<dbReference type="STRING" id="83332.Rv3874"/>
<dbReference type="iPTMnet" id="P9WNK5"/>
<dbReference type="PaxDb" id="83332-Rv3874"/>
<dbReference type="DNASU" id="886194"/>
<dbReference type="GeneID" id="45427878"/>
<dbReference type="GeneID" id="886194"/>
<dbReference type="KEGG" id="mtu:Rv3874"/>
<dbReference type="TubercuList" id="Rv3874"/>
<dbReference type="eggNOG" id="COG4842">
    <property type="taxonomic scope" value="Bacteria"/>
</dbReference>
<dbReference type="InParanoid" id="P9WNK5"/>
<dbReference type="OrthoDB" id="4640046at2"/>
<dbReference type="Proteomes" id="UP000001584">
    <property type="component" value="Chromosome"/>
</dbReference>
<dbReference type="GO" id="GO:0005576">
    <property type="term" value="C:extracellular region"/>
    <property type="evidence" value="ECO:0000314"/>
    <property type="project" value="MTBBASE"/>
</dbReference>
<dbReference type="GO" id="GO:0044165">
    <property type="term" value="C:host cell endoplasmic reticulum"/>
    <property type="evidence" value="ECO:0007669"/>
    <property type="project" value="UniProtKB-SubCell"/>
</dbReference>
<dbReference type="GO" id="GO:0044228">
    <property type="term" value="C:host cell surface"/>
    <property type="evidence" value="ECO:0007669"/>
    <property type="project" value="UniProtKB-SubCell"/>
</dbReference>
<dbReference type="GO" id="GO:0009274">
    <property type="term" value="C:peptidoglycan-based cell wall"/>
    <property type="evidence" value="ECO:0007005"/>
    <property type="project" value="MTBBASE"/>
</dbReference>
<dbReference type="GO" id="GO:0005886">
    <property type="term" value="C:plasma membrane"/>
    <property type="evidence" value="ECO:0007005"/>
    <property type="project" value="MTBBASE"/>
</dbReference>
<dbReference type="GO" id="GO:0046812">
    <property type="term" value="F:host cell surface binding"/>
    <property type="evidence" value="ECO:0000314"/>
    <property type="project" value="MTBBASE"/>
</dbReference>
<dbReference type="GO" id="GO:0044315">
    <property type="term" value="P:protein secretion by the type VII secretion system"/>
    <property type="evidence" value="ECO:0000315"/>
    <property type="project" value="MTBBASE"/>
</dbReference>
<dbReference type="FunFam" id="1.10.287.1060:FF:000008">
    <property type="entry name" value="ESAT-6-like protein"/>
    <property type="match status" value="1"/>
</dbReference>
<dbReference type="Gene3D" id="1.10.287.1060">
    <property type="entry name" value="ESAT-6-like"/>
    <property type="match status" value="1"/>
</dbReference>
<dbReference type="InterPro" id="IPR036689">
    <property type="entry name" value="ESAT-6-like_sf"/>
</dbReference>
<dbReference type="InterPro" id="IPR010310">
    <property type="entry name" value="T7SS_ESAT-6-like"/>
</dbReference>
<dbReference type="NCBIfam" id="TIGR03930">
    <property type="entry name" value="WXG100_ESAT6"/>
    <property type="match status" value="1"/>
</dbReference>
<dbReference type="Pfam" id="PF06013">
    <property type="entry name" value="WXG100"/>
    <property type="match status" value="1"/>
</dbReference>
<dbReference type="SUPFAM" id="SSF140453">
    <property type="entry name" value="EsxAB dimer-like"/>
    <property type="match status" value="1"/>
</dbReference>
<proteinExistence type="evidence at protein level"/>
<gene>
    <name evidence="29" type="primary">esxB</name>
    <name type="synonym">cfp10</name>
    <name evidence="30" type="synonym">lhp</name>
    <name evidence="31" type="synonym">mtsA10</name>
    <name type="ordered locus">Rv3874</name>
    <name type="ORF">MTV027.09</name>
</gene>
<accession>P9WNK5</accession>
<accession>L0TDT9</accession>
<accession>O69739</accession>
<accession>P0A566</accession>
<evidence type="ECO:0000250" key="1">
    <source>
        <dbReference type="UniProtKB" id="D1A4H0"/>
    </source>
</evidence>
<evidence type="ECO:0000255" key="2"/>
<evidence type="ECO:0000256" key="3">
    <source>
        <dbReference type="SAM" id="MobiDB-lite"/>
    </source>
</evidence>
<evidence type="ECO:0000269" key="4">
    <source>
    </source>
</evidence>
<evidence type="ECO:0000269" key="5">
    <source>
    </source>
</evidence>
<evidence type="ECO:0000269" key="6">
    <source>
    </source>
</evidence>
<evidence type="ECO:0000269" key="7">
    <source>
    </source>
</evidence>
<evidence type="ECO:0000269" key="8">
    <source>
    </source>
</evidence>
<evidence type="ECO:0000269" key="9">
    <source>
    </source>
</evidence>
<evidence type="ECO:0000269" key="10">
    <source>
    </source>
</evidence>
<evidence type="ECO:0000269" key="11">
    <source>
    </source>
</evidence>
<evidence type="ECO:0000269" key="12">
    <source>
    </source>
</evidence>
<evidence type="ECO:0000269" key="13">
    <source>
    </source>
</evidence>
<evidence type="ECO:0000269" key="14">
    <source>
    </source>
</evidence>
<evidence type="ECO:0000269" key="15">
    <source>
    </source>
</evidence>
<evidence type="ECO:0000269" key="16">
    <source>
    </source>
</evidence>
<evidence type="ECO:0000269" key="17">
    <source>
    </source>
</evidence>
<evidence type="ECO:0000269" key="18">
    <source>
    </source>
</evidence>
<evidence type="ECO:0000269" key="19">
    <source>
    </source>
</evidence>
<evidence type="ECO:0000269" key="20">
    <source>
    </source>
</evidence>
<evidence type="ECO:0000269" key="21">
    <source>
    </source>
</evidence>
<evidence type="ECO:0000269" key="22">
    <source>
    </source>
</evidence>
<evidence type="ECO:0000269" key="23">
    <source>
    </source>
</evidence>
<evidence type="ECO:0000269" key="24">
    <source>
    </source>
</evidence>
<evidence type="ECO:0000269" key="25">
    <source>
    </source>
</evidence>
<evidence type="ECO:0000269" key="26">
    <source>
    </source>
</evidence>
<evidence type="ECO:0000269" key="27">
    <source>
    </source>
</evidence>
<evidence type="ECO:0000269" key="28">
    <source>
    </source>
</evidence>
<evidence type="ECO:0000303" key="29">
    <source>
    </source>
</evidence>
<evidence type="ECO:0000303" key="30">
    <source>
    </source>
</evidence>
<evidence type="ECO:0000303" key="31">
    <source ref="2"/>
</evidence>
<evidence type="ECO:0000305" key="32">
    <source>
    </source>
</evidence>
<evidence type="ECO:0000305" key="33">
    <source>
    </source>
</evidence>
<evidence type="ECO:0000305" key="34">
    <source>
    </source>
</evidence>
<evidence type="ECO:0007744" key="35">
    <source>
    </source>
</evidence>
<evidence type="ECO:0007829" key="36">
    <source>
        <dbReference type="PDB" id="3FAV"/>
    </source>
</evidence>
<evidence type="ECO:0007829" key="37">
    <source>
        <dbReference type="PDB" id="6J19"/>
    </source>
</evidence>